<sequence length="305" mass="32930">MELIFLGTSAGVPTRTRNVTAILLNLQHPTQSGLWLFDCGEGTQHQLLHTAFNPGKLDKIFISHLHGDHLFGLPGLLCSRSMSGIIQPLTIYGPQGIREFVETALRISGSWTDYPLEIVEIGAGEILDDGLRKVTAYPLEHPLECYGYRIEEHDKPGALNAQALKAAGVPPGPLFQELKAGKTITLEDGRQINGADYLAAPVPGKALAIFGDTGPCDAALDLAKGVDVMVHEATLDITMEAKANSRGHSSTRQAATLAREAGVGKLIITHVSSRYDDKGCQHLLRECRSIFPATELANDFTVFNV</sequence>
<accession>B6I7L2</accession>
<feature type="chain" id="PRO_1000187959" description="Ribonuclease BN">
    <location>
        <begin position="1"/>
        <end position="305"/>
    </location>
</feature>
<feature type="active site" description="Proton acceptor" evidence="1">
    <location>
        <position position="68"/>
    </location>
</feature>
<feature type="binding site" evidence="1">
    <location>
        <position position="64"/>
    </location>
    <ligand>
        <name>Zn(2+)</name>
        <dbReference type="ChEBI" id="CHEBI:29105"/>
        <label>1</label>
        <note>catalytic</note>
    </ligand>
</feature>
<feature type="binding site" evidence="1">
    <location>
        <position position="66"/>
    </location>
    <ligand>
        <name>Zn(2+)</name>
        <dbReference type="ChEBI" id="CHEBI:29105"/>
        <label>1</label>
        <note>catalytic</note>
    </ligand>
</feature>
<feature type="binding site" evidence="1">
    <location>
        <position position="68"/>
    </location>
    <ligand>
        <name>Zn(2+)</name>
        <dbReference type="ChEBI" id="CHEBI:29105"/>
        <label>2</label>
        <note>catalytic</note>
    </ligand>
</feature>
<feature type="binding site" evidence="1">
    <location>
        <position position="69"/>
    </location>
    <ligand>
        <name>Zn(2+)</name>
        <dbReference type="ChEBI" id="CHEBI:29105"/>
        <label>2</label>
        <note>catalytic</note>
    </ligand>
</feature>
<feature type="binding site" evidence="1">
    <location>
        <position position="141"/>
    </location>
    <ligand>
        <name>Zn(2+)</name>
        <dbReference type="ChEBI" id="CHEBI:29105"/>
        <label>1</label>
        <note>catalytic</note>
    </ligand>
</feature>
<feature type="binding site" evidence="1">
    <location>
        <position position="212"/>
    </location>
    <ligand>
        <name>Zn(2+)</name>
        <dbReference type="ChEBI" id="CHEBI:29105"/>
        <label>1</label>
        <note>catalytic</note>
    </ligand>
</feature>
<feature type="binding site" evidence="1">
    <location>
        <position position="212"/>
    </location>
    <ligand>
        <name>Zn(2+)</name>
        <dbReference type="ChEBI" id="CHEBI:29105"/>
        <label>2</label>
        <note>catalytic</note>
    </ligand>
</feature>
<feature type="binding site" evidence="1">
    <location>
        <position position="270"/>
    </location>
    <ligand>
        <name>Zn(2+)</name>
        <dbReference type="ChEBI" id="CHEBI:29105"/>
        <label>2</label>
        <note>catalytic</note>
    </ligand>
</feature>
<organism>
    <name type="scientific">Escherichia coli (strain SE11)</name>
    <dbReference type="NCBI Taxonomy" id="409438"/>
    <lineage>
        <taxon>Bacteria</taxon>
        <taxon>Pseudomonadati</taxon>
        <taxon>Pseudomonadota</taxon>
        <taxon>Gammaproteobacteria</taxon>
        <taxon>Enterobacterales</taxon>
        <taxon>Enterobacteriaceae</taxon>
        <taxon>Escherichia</taxon>
    </lineage>
</organism>
<evidence type="ECO:0000255" key="1">
    <source>
        <dbReference type="HAMAP-Rule" id="MF_01818"/>
    </source>
</evidence>
<comment type="function">
    <text evidence="1">Zinc phosphodiesterase, which has both exoribonuclease and endoribonuclease activities.</text>
</comment>
<comment type="cofactor">
    <cofactor evidence="1">
        <name>Zn(2+)</name>
        <dbReference type="ChEBI" id="CHEBI:29105"/>
    </cofactor>
    <text evidence="1">Binds 2 Zn(2+) ions.</text>
</comment>
<comment type="subunit">
    <text evidence="1">Homodimer.</text>
</comment>
<comment type="similarity">
    <text evidence="1">Belongs to the RNase Z family. RNase BN subfamily.</text>
</comment>
<gene>
    <name evidence="1" type="primary">rbn</name>
    <name type="synonym">rnz</name>
    <name type="ordered locus">ECSE_2528</name>
</gene>
<reference key="1">
    <citation type="journal article" date="2008" name="DNA Res.">
        <title>Complete genome sequence and comparative analysis of the wild-type commensal Escherichia coli strain SE11 isolated from a healthy adult.</title>
        <authorList>
            <person name="Oshima K."/>
            <person name="Toh H."/>
            <person name="Ogura Y."/>
            <person name="Sasamoto H."/>
            <person name="Morita H."/>
            <person name="Park S.-H."/>
            <person name="Ooka T."/>
            <person name="Iyoda S."/>
            <person name="Taylor T.D."/>
            <person name="Hayashi T."/>
            <person name="Itoh K."/>
            <person name="Hattori M."/>
        </authorList>
    </citation>
    <scope>NUCLEOTIDE SEQUENCE [LARGE SCALE GENOMIC DNA]</scope>
    <source>
        <strain>SE11</strain>
    </source>
</reference>
<name>RBN_ECOSE</name>
<dbReference type="EC" id="3.1.-.-" evidence="1"/>
<dbReference type="EMBL" id="AP009240">
    <property type="protein sequence ID" value="BAG78052.1"/>
    <property type="molecule type" value="Genomic_DNA"/>
</dbReference>
<dbReference type="RefSeq" id="WP_001300687.1">
    <property type="nucleotide sequence ID" value="NC_011415.1"/>
</dbReference>
<dbReference type="SMR" id="B6I7L2"/>
<dbReference type="KEGG" id="ecy:ECSE_2528"/>
<dbReference type="HOGENOM" id="CLU_031317_2_0_6"/>
<dbReference type="Proteomes" id="UP000008199">
    <property type="component" value="Chromosome"/>
</dbReference>
<dbReference type="GO" id="GO:0042781">
    <property type="term" value="F:3'-tRNA processing endoribonuclease activity"/>
    <property type="evidence" value="ECO:0007669"/>
    <property type="project" value="TreeGrafter"/>
</dbReference>
<dbReference type="GO" id="GO:0004527">
    <property type="term" value="F:exonuclease activity"/>
    <property type="evidence" value="ECO:0007669"/>
    <property type="project" value="UniProtKB-UniRule"/>
</dbReference>
<dbReference type="GO" id="GO:0008270">
    <property type="term" value="F:zinc ion binding"/>
    <property type="evidence" value="ECO:0007669"/>
    <property type="project" value="UniProtKB-UniRule"/>
</dbReference>
<dbReference type="CDD" id="cd07717">
    <property type="entry name" value="RNaseZ_ZiPD-like_MBL-fold"/>
    <property type="match status" value="1"/>
</dbReference>
<dbReference type="FunFam" id="3.60.15.10:FF:000002">
    <property type="entry name" value="Ribonuclease Z"/>
    <property type="match status" value="1"/>
</dbReference>
<dbReference type="Gene3D" id="3.60.15.10">
    <property type="entry name" value="Ribonuclease Z/Hydroxyacylglutathione hydrolase-like"/>
    <property type="match status" value="1"/>
</dbReference>
<dbReference type="HAMAP" id="MF_01818">
    <property type="entry name" value="RNase_Z_BN"/>
    <property type="match status" value="1"/>
</dbReference>
<dbReference type="InterPro" id="IPR001279">
    <property type="entry name" value="Metallo-B-lactamas"/>
</dbReference>
<dbReference type="InterPro" id="IPR036866">
    <property type="entry name" value="RibonucZ/Hydroxyglut_hydro"/>
</dbReference>
<dbReference type="InterPro" id="IPR013469">
    <property type="entry name" value="Rnase_BN"/>
</dbReference>
<dbReference type="InterPro" id="IPR013471">
    <property type="entry name" value="RNase_Z/BN"/>
</dbReference>
<dbReference type="NCBIfam" id="NF000800">
    <property type="entry name" value="PRK00055.1-1"/>
    <property type="match status" value="1"/>
</dbReference>
<dbReference type="NCBIfam" id="NF000801">
    <property type="entry name" value="PRK00055.1-3"/>
    <property type="match status" value="1"/>
</dbReference>
<dbReference type="NCBIfam" id="TIGR02651">
    <property type="entry name" value="RNase_Z"/>
    <property type="match status" value="1"/>
</dbReference>
<dbReference type="NCBIfam" id="TIGR02649">
    <property type="entry name" value="true_RNase_BN"/>
    <property type="match status" value="1"/>
</dbReference>
<dbReference type="PANTHER" id="PTHR46018">
    <property type="entry name" value="ZINC PHOSPHODIESTERASE ELAC PROTEIN 1"/>
    <property type="match status" value="1"/>
</dbReference>
<dbReference type="PANTHER" id="PTHR46018:SF2">
    <property type="entry name" value="ZINC PHOSPHODIESTERASE ELAC PROTEIN 1"/>
    <property type="match status" value="1"/>
</dbReference>
<dbReference type="Pfam" id="PF12706">
    <property type="entry name" value="Lactamase_B_2"/>
    <property type="match status" value="1"/>
</dbReference>
<dbReference type="SMART" id="SM00849">
    <property type="entry name" value="Lactamase_B"/>
    <property type="match status" value="1"/>
</dbReference>
<dbReference type="SUPFAM" id="SSF56281">
    <property type="entry name" value="Metallo-hydrolase/oxidoreductase"/>
    <property type="match status" value="1"/>
</dbReference>
<proteinExistence type="inferred from homology"/>
<keyword id="KW-0255">Endonuclease</keyword>
<keyword id="KW-0269">Exonuclease</keyword>
<keyword id="KW-0378">Hydrolase</keyword>
<keyword id="KW-0479">Metal-binding</keyword>
<keyword id="KW-0540">Nuclease</keyword>
<keyword id="KW-0819">tRNA processing</keyword>
<keyword id="KW-0862">Zinc</keyword>
<protein>
    <recommendedName>
        <fullName evidence="1">Ribonuclease BN</fullName>
        <shortName evidence="1">RNase BN</shortName>
        <ecNumber evidence="1">3.1.-.-</ecNumber>
    </recommendedName>
    <alternativeName>
        <fullName evidence="1">Ribonuclease Z homolog</fullName>
        <shortName evidence="1">RNase Z homolog</shortName>
    </alternativeName>
</protein>